<evidence type="ECO:0000250" key="1"/>
<evidence type="ECO:0000255" key="2">
    <source>
        <dbReference type="PROSITE-ProRule" id="PRU00159"/>
    </source>
</evidence>
<evidence type="ECO:0000255" key="3">
    <source>
        <dbReference type="PROSITE-ProRule" id="PRU00256"/>
    </source>
</evidence>
<evidence type="ECO:0000255" key="4">
    <source>
        <dbReference type="PROSITE-ProRule" id="PRU10027"/>
    </source>
</evidence>
<evidence type="ECO:0000269" key="5">
    <source>
    </source>
</evidence>
<evidence type="ECO:0000305" key="6"/>
<keyword id="KW-0025">Alternative splicing</keyword>
<keyword id="KW-0067">ATP-binding</keyword>
<keyword id="KW-0418">Kinase</keyword>
<keyword id="KW-0464">Manganese</keyword>
<keyword id="KW-0547">Nucleotide-binding</keyword>
<keyword id="KW-1185">Reference proteome</keyword>
<keyword id="KW-0723">Serine/threonine-protein kinase</keyword>
<keyword id="KW-0808">Transferase</keyword>
<organism>
    <name type="scientific">Oryza sativa subsp. japonica</name>
    <name type="common">Rice</name>
    <dbReference type="NCBI Taxonomy" id="39947"/>
    <lineage>
        <taxon>Eukaryota</taxon>
        <taxon>Viridiplantae</taxon>
        <taxon>Streptophyta</taxon>
        <taxon>Embryophyta</taxon>
        <taxon>Tracheophyta</taxon>
        <taxon>Spermatophyta</taxon>
        <taxon>Magnoliopsida</taxon>
        <taxon>Liliopsida</taxon>
        <taxon>Poales</taxon>
        <taxon>Poaceae</taxon>
        <taxon>BOP clade</taxon>
        <taxon>Oryzoideae</taxon>
        <taxon>Oryzeae</taxon>
        <taxon>Oryzinae</taxon>
        <taxon>Oryza</taxon>
        <taxon>Oryza sativa</taxon>
    </lineage>
</organism>
<name>CIPKN_ORYSJ</name>
<dbReference type="EC" id="2.7.11.1"/>
<dbReference type="EMBL" id="AP003703">
    <property type="protein sequence ID" value="BAC82911.1"/>
    <property type="molecule type" value="Genomic_DNA"/>
</dbReference>
<dbReference type="EMBL" id="AP008213">
    <property type="protein sequence ID" value="BAF20815.1"/>
    <property type="molecule type" value="Genomic_DNA"/>
</dbReference>
<dbReference type="EMBL" id="AP014963">
    <property type="protein sequence ID" value="BAT00079.1"/>
    <property type="molecule type" value="Genomic_DNA"/>
</dbReference>
<dbReference type="EMBL" id="AK069726">
    <property type="status" value="NOT_ANNOTATED_CDS"/>
    <property type="molecule type" value="mRNA"/>
</dbReference>
<dbReference type="SMR" id="Q6ZLP5"/>
<dbReference type="FunCoup" id="Q6ZLP5">
    <property type="interactions" value="1128"/>
</dbReference>
<dbReference type="STRING" id="39947.Q6ZLP5"/>
<dbReference type="PaxDb" id="39947-Q6ZLP5"/>
<dbReference type="EnsemblPlants" id="Os07t0150700-01">
    <molecule id="Q6ZLP5-1"/>
    <property type="protein sequence ID" value="Os07t0150700-01"/>
    <property type="gene ID" value="Os07g0150700"/>
</dbReference>
<dbReference type="Gramene" id="Os07t0150700-01">
    <molecule id="Q6ZLP5-1"/>
    <property type="protein sequence ID" value="Os07t0150700-01"/>
    <property type="gene ID" value="Os07g0150700"/>
</dbReference>
<dbReference type="KEGG" id="dosa:Os07g0150700"/>
<dbReference type="eggNOG" id="KOG0583">
    <property type="taxonomic scope" value="Eukaryota"/>
</dbReference>
<dbReference type="HOGENOM" id="CLU_000288_59_0_1"/>
<dbReference type="InParanoid" id="Q6ZLP5"/>
<dbReference type="OMA" id="GYTCKVG"/>
<dbReference type="Proteomes" id="UP000000763">
    <property type="component" value="Chromosome 7"/>
</dbReference>
<dbReference type="Proteomes" id="UP000059680">
    <property type="component" value="Chromosome 7"/>
</dbReference>
<dbReference type="GO" id="GO:0005829">
    <property type="term" value="C:cytosol"/>
    <property type="evidence" value="ECO:0007669"/>
    <property type="project" value="EnsemblPlants"/>
</dbReference>
<dbReference type="GO" id="GO:0005634">
    <property type="term" value="C:nucleus"/>
    <property type="evidence" value="ECO:0007669"/>
    <property type="project" value="EnsemblPlants"/>
</dbReference>
<dbReference type="GO" id="GO:0005886">
    <property type="term" value="C:plasma membrane"/>
    <property type="evidence" value="ECO:0007669"/>
    <property type="project" value="EnsemblPlants"/>
</dbReference>
<dbReference type="GO" id="GO:0005524">
    <property type="term" value="F:ATP binding"/>
    <property type="evidence" value="ECO:0007669"/>
    <property type="project" value="UniProtKB-KW"/>
</dbReference>
<dbReference type="GO" id="GO:0106310">
    <property type="term" value="F:protein serine kinase activity"/>
    <property type="evidence" value="ECO:0007669"/>
    <property type="project" value="RHEA"/>
</dbReference>
<dbReference type="GO" id="GO:0004674">
    <property type="term" value="F:protein serine/threonine kinase activity"/>
    <property type="evidence" value="ECO:0000318"/>
    <property type="project" value="GO_Central"/>
</dbReference>
<dbReference type="GO" id="GO:1990573">
    <property type="term" value="P:potassium ion import across plasma membrane"/>
    <property type="evidence" value="ECO:0007669"/>
    <property type="project" value="EnsemblPlants"/>
</dbReference>
<dbReference type="GO" id="GO:0010119">
    <property type="term" value="P:regulation of stomatal movement"/>
    <property type="evidence" value="ECO:0007669"/>
    <property type="project" value="EnsemblPlants"/>
</dbReference>
<dbReference type="GO" id="GO:0007584">
    <property type="term" value="P:response to nutrient"/>
    <property type="evidence" value="ECO:0007669"/>
    <property type="project" value="EnsemblPlants"/>
</dbReference>
<dbReference type="GO" id="GO:0009414">
    <property type="term" value="P:response to water deprivation"/>
    <property type="evidence" value="ECO:0007669"/>
    <property type="project" value="EnsemblPlants"/>
</dbReference>
<dbReference type="GO" id="GO:0007165">
    <property type="term" value="P:signal transduction"/>
    <property type="evidence" value="ECO:0007669"/>
    <property type="project" value="InterPro"/>
</dbReference>
<dbReference type="GO" id="GO:0010118">
    <property type="term" value="P:stomatal movement"/>
    <property type="evidence" value="ECO:0007669"/>
    <property type="project" value="EnsemblPlants"/>
</dbReference>
<dbReference type="CDD" id="cd12195">
    <property type="entry name" value="CIPK_C"/>
    <property type="match status" value="1"/>
</dbReference>
<dbReference type="CDD" id="cd14663">
    <property type="entry name" value="STKc_SnRK3"/>
    <property type="match status" value="1"/>
</dbReference>
<dbReference type="FunFam" id="1.10.510.10:FF:000279">
    <property type="entry name" value="Non-specific serine/threonine protein kinase"/>
    <property type="match status" value="1"/>
</dbReference>
<dbReference type="FunFam" id="3.30.200.20:FF:000096">
    <property type="entry name" value="Non-specific serine/threonine protein kinase"/>
    <property type="match status" value="1"/>
</dbReference>
<dbReference type="FunFam" id="3.30.310.80:FF:000002">
    <property type="entry name" value="Non-specific serine/threonine protein kinase"/>
    <property type="match status" value="1"/>
</dbReference>
<dbReference type="Gene3D" id="3.30.310.80">
    <property type="entry name" value="Kinase associated domain 1, KA1"/>
    <property type="match status" value="1"/>
</dbReference>
<dbReference type="Gene3D" id="3.30.200.20">
    <property type="entry name" value="Phosphorylase Kinase, domain 1"/>
    <property type="match status" value="1"/>
</dbReference>
<dbReference type="Gene3D" id="1.10.510.10">
    <property type="entry name" value="Transferase(Phosphotransferase) domain 1"/>
    <property type="match status" value="1"/>
</dbReference>
<dbReference type="InterPro" id="IPR011009">
    <property type="entry name" value="Kinase-like_dom_sf"/>
</dbReference>
<dbReference type="InterPro" id="IPR018451">
    <property type="entry name" value="NAF/FISL_domain"/>
</dbReference>
<dbReference type="InterPro" id="IPR004041">
    <property type="entry name" value="NAF_dom"/>
</dbReference>
<dbReference type="InterPro" id="IPR000719">
    <property type="entry name" value="Prot_kinase_dom"/>
</dbReference>
<dbReference type="InterPro" id="IPR017441">
    <property type="entry name" value="Protein_kinase_ATP_BS"/>
</dbReference>
<dbReference type="InterPro" id="IPR008271">
    <property type="entry name" value="Ser/Thr_kinase_AS"/>
</dbReference>
<dbReference type="PANTHER" id="PTHR43895">
    <property type="entry name" value="CALCIUM/CALMODULIN-DEPENDENT PROTEIN KINASE KINASE-RELATED"/>
    <property type="match status" value="1"/>
</dbReference>
<dbReference type="PANTHER" id="PTHR43895:SF123">
    <property type="entry name" value="NON-SPECIFIC SERINE_THREONINE PROTEIN KINASE"/>
    <property type="match status" value="1"/>
</dbReference>
<dbReference type="Pfam" id="PF03822">
    <property type="entry name" value="NAF"/>
    <property type="match status" value="1"/>
</dbReference>
<dbReference type="Pfam" id="PF00069">
    <property type="entry name" value="Pkinase"/>
    <property type="match status" value="1"/>
</dbReference>
<dbReference type="SMART" id="SM00220">
    <property type="entry name" value="S_TKc"/>
    <property type="match status" value="1"/>
</dbReference>
<dbReference type="SUPFAM" id="SSF56112">
    <property type="entry name" value="Protein kinase-like (PK-like)"/>
    <property type="match status" value="1"/>
</dbReference>
<dbReference type="PROSITE" id="PS50816">
    <property type="entry name" value="NAF"/>
    <property type="match status" value="1"/>
</dbReference>
<dbReference type="PROSITE" id="PS00107">
    <property type="entry name" value="PROTEIN_KINASE_ATP"/>
    <property type="match status" value="1"/>
</dbReference>
<dbReference type="PROSITE" id="PS50011">
    <property type="entry name" value="PROTEIN_KINASE_DOM"/>
    <property type="match status" value="1"/>
</dbReference>
<dbReference type="PROSITE" id="PS00108">
    <property type="entry name" value="PROTEIN_KINASE_ST"/>
    <property type="match status" value="1"/>
</dbReference>
<protein>
    <recommendedName>
        <fullName>CBL-interacting protein kinase 23</fullName>
        <ecNumber>2.7.11.1</ecNumber>
    </recommendedName>
    <alternativeName>
        <fullName>OsCIPK23</fullName>
    </alternativeName>
</protein>
<accession>Q6ZLP5</accession>
<accession>A0A0P0X2P1</accession>
<reference key="1">
    <citation type="journal article" date="2005" name="Nature">
        <title>The map-based sequence of the rice genome.</title>
        <authorList>
            <consortium name="International rice genome sequencing project (IRGSP)"/>
        </authorList>
    </citation>
    <scope>NUCLEOTIDE SEQUENCE [LARGE SCALE GENOMIC DNA]</scope>
    <source>
        <strain>cv. Nipponbare</strain>
    </source>
</reference>
<reference key="2">
    <citation type="journal article" date="2008" name="Nucleic Acids Res.">
        <title>The rice annotation project database (RAP-DB): 2008 update.</title>
        <authorList>
            <consortium name="The rice annotation project (RAP)"/>
        </authorList>
    </citation>
    <scope>GENOME REANNOTATION</scope>
    <source>
        <strain>cv. Nipponbare</strain>
    </source>
</reference>
<reference key="3">
    <citation type="journal article" date="2013" name="Rice">
        <title>Improvement of the Oryza sativa Nipponbare reference genome using next generation sequence and optical map data.</title>
        <authorList>
            <person name="Kawahara Y."/>
            <person name="de la Bastide M."/>
            <person name="Hamilton J.P."/>
            <person name="Kanamori H."/>
            <person name="McCombie W.R."/>
            <person name="Ouyang S."/>
            <person name="Schwartz D.C."/>
            <person name="Tanaka T."/>
            <person name="Wu J."/>
            <person name="Zhou S."/>
            <person name="Childs K.L."/>
            <person name="Davidson R.M."/>
            <person name="Lin H."/>
            <person name="Quesada-Ocampo L."/>
            <person name="Vaillancourt B."/>
            <person name="Sakai H."/>
            <person name="Lee S.S."/>
            <person name="Kim J."/>
            <person name="Numa H."/>
            <person name="Itoh T."/>
            <person name="Buell C.R."/>
            <person name="Matsumoto T."/>
        </authorList>
    </citation>
    <scope>GENOME REANNOTATION</scope>
    <source>
        <strain>cv. Nipponbare</strain>
    </source>
</reference>
<reference key="4">
    <citation type="journal article" date="2003" name="Science">
        <title>Collection, mapping, and annotation of over 28,000 cDNA clones from japonica rice.</title>
        <authorList>
            <consortium name="The rice full-length cDNA consortium"/>
        </authorList>
    </citation>
    <scope>NUCLEOTIDE SEQUENCE [LARGE SCALE MRNA] (ISOFORM 1)</scope>
    <source>
        <strain>cv. Nipponbare</strain>
    </source>
</reference>
<reference key="5">
    <citation type="journal article" date="2004" name="Plant Physiol.">
        <title>Calcium sensors and their interacting protein kinases: genomics of the Arabidopsis and rice CBL-CIPK signaling networks.</title>
        <authorList>
            <person name="Kolukisaoglu U."/>
            <person name="Weinl S."/>
            <person name="Blazevic D."/>
            <person name="Batistic O."/>
            <person name="Kudla J."/>
        </authorList>
    </citation>
    <scope>GENE FAMILY</scope>
    <scope>NOMENCLATURE</scope>
</reference>
<reference key="6">
    <citation type="journal article" date="2007" name="Plant Physiol.">
        <title>Characterization of stress-responsive CIPK genes in rice for stress tolerance improvement.</title>
        <authorList>
            <person name="Xiang Y."/>
            <person name="Huang Y."/>
            <person name="Xiong L."/>
        </authorList>
    </citation>
    <scope>INDUCTION</scope>
</reference>
<gene>
    <name type="primary">CIPK23</name>
    <name type="ordered locus">Os07g0150700</name>
    <name type="ordered locus">LOC_Os07g05620</name>
    <name type="ORF">OJ1027_G06.32</name>
</gene>
<comment type="function">
    <text evidence="1">CIPK serine-threonine protein kinases interact with CBL proteins. Binding of a CBL protein to the regulatory NAF domain of CIPK protein lead to the activation of the kinase in a calcium-dependent manner (By similarity).</text>
</comment>
<comment type="catalytic activity">
    <reaction>
        <text>L-seryl-[protein] + ATP = O-phospho-L-seryl-[protein] + ADP + H(+)</text>
        <dbReference type="Rhea" id="RHEA:17989"/>
        <dbReference type="Rhea" id="RHEA-COMP:9863"/>
        <dbReference type="Rhea" id="RHEA-COMP:11604"/>
        <dbReference type="ChEBI" id="CHEBI:15378"/>
        <dbReference type="ChEBI" id="CHEBI:29999"/>
        <dbReference type="ChEBI" id="CHEBI:30616"/>
        <dbReference type="ChEBI" id="CHEBI:83421"/>
        <dbReference type="ChEBI" id="CHEBI:456216"/>
        <dbReference type="EC" id="2.7.11.1"/>
    </reaction>
</comment>
<comment type="catalytic activity">
    <reaction>
        <text>L-threonyl-[protein] + ATP = O-phospho-L-threonyl-[protein] + ADP + H(+)</text>
        <dbReference type="Rhea" id="RHEA:46608"/>
        <dbReference type="Rhea" id="RHEA-COMP:11060"/>
        <dbReference type="Rhea" id="RHEA-COMP:11605"/>
        <dbReference type="ChEBI" id="CHEBI:15378"/>
        <dbReference type="ChEBI" id="CHEBI:30013"/>
        <dbReference type="ChEBI" id="CHEBI:30616"/>
        <dbReference type="ChEBI" id="CHEBI:61977"/>
        <dbReference type="ChEBI" id="CHEBI:456216"/>
        <dbReference type="EC" id="2.7.11.1"/>
    </reaction>
</comment>
<comment type="cofactor">
    <cofactor evidence="1">
        <name>Mn(2+)</name>
        <dbReference type="ChEBI" id="CHEBI:29035"/>
    </cofactor>
</comment>
<comment type="alternative products">
    <event type="alternative splicing"/>
    <isoform>
        <id>Q6ZLP5-1</id>
        <name>1</name>
        <sequence type="displayed"/>
    </isoform>
    <isoform>
        <id>Q6ZLP5-2</id>
        <name>2</name>
        <sequence type="described" ref="VSP_034045"/>
    </isoform>
</comment>
<comment type="induction">
    <text evidence="5">By drought stress.</text>
</comment>
<comment type="domain">
    <text evidence="1">The activation loop within the kinase domain is the target of phosphorylation/activation by upstream protein kinases. The PPI motif mediates the interaction with the ABI (abscisic acid-insensitive) phosphatases (By similarity).</text>
</comment>
<comment type="miscellaneous">
    <molecule>Isoform 2</molecule>
    <text evidence="6">May be due to a competing acceptor splice site.</text>
</comment>
<comment type="similarity">
    <text evidence="6">Belongs to the protein kinase superfamily. CAMK Ser/Thr protein kinase family. SNF1 subfamily.</text>
</comment>
<proteinExistence type="evidence at transcript level"/>
<feature type="chain" id="PRO_0000338381" description="CBL-interacting protein kinase 23">
    <location>
        <begin position="1"/>
        <end position="450"/>
    </location>
</feature>
<feature type="domain" description="Protein kinase" evidence="2">
    <location>
        <begin position="13"/>
        <end position="268"/>
    </location>
</feature>
<feature type="domain" description="NAF" evidence="3">
    <location>
        <begin position="306"/>
        <end position="331"/>
    </location>
</feature>
<feature type="region of interest" description="Activation loop" evidence="1">
    <location>
        <begin position="154"/>
        <end position="183"/>
    </location>
</feature>
<feature type="region of interest" description="PPI" evidence="1">
    <location>
        <begin position="339"/>
        <end position="368"/>
    </location>
</feature>
<feature type="active site" description="Proton acceptor" evidence="2 4">
    <location>
        <position position="136"/>
    </location>
</feature>
<feature type="binding site" evidence="2">
    <location>
        <begin position="19"/>
        <end position="27"/>
    </location>
    <ligand>
        <name>ATP</name>
        <dbReference type="ChEBI" id="CHEBI:30616"/>
    </ligand>
</feature>
<feature type="binding site" evidence="2">
    <location>
        <position position="42"/>
    </location>
    <ligand>
        <name>ATP</name>
        <dbReference type="ChEBI" id="CHEBI:30616"/>
    </ligand>
</feature>
<feature type="splice variant" id="VSP_034045" description="In isoform 2." evidence="6">
    <location>
        <position position="335"/>
    </location>
</feature>
<feature type="sequence conflict" description="In Ref. 4; AK069726." evidence="6" ref="4">
    <original>Q</original>
    <variation>P</variation>
    <location>
        <position position="118"/>
    </location>
</feature>
<sequence length="450" mass="50708">MSVSGGRTRVGRYELGRTLGEGTFAKVKFARNADSGENVAIKILDKDKVLKHKMIAQIKREISTMKLIRHPNVIRMHEVMASKTKIYIVMELVTGGELFDKIASRGRLKEDDARKYFQQLINAVDYCHSRGVYHRDLKPENLLLDASGTLKVSDFGLSALSQQVREDGLLHTTCGTPNYVAPEVINNKGYDGAKADLWSCGVILFVLMAGYLPFEDSNLMSLYKKIFKADFSCPSWFSTSAKKLIKKILDPNPSTRITIAELINNEWFKKGYQPPRFETADVNLDDINSIFNESGDQTQLVVERREERPSVMNAFELISTSQGLNLGTLFEKQSQGSVKRETRFASRLPANEILSKIEAAAGPMGFNVQKRNYKLKLQGENPGRKGQLAIATEVFEVTPSLYMVELRKSNGDTLEFHKFYHNISNGLKDVMWKPESSIIAGDEIQHRRSP</sequence>